<sequence>MASSASKFIKCVTVGDGAVGKTCMLICYTSNKFPTDYIPTVFDNFSVNVVVEGITVNLGLWDTAGQEDYNRLRPLSYRGADVFVLAFSLISRASYENVFKKWIPELQHFAPGVPIVLVGTKMDLREDRHYLSDHPGLSPVTTSQGEELRKHIGATYYIECSSKTQQNVKAVFDAAIKVVIKPAVKQKEKKKKQKPRSGCLSNILCGKN</sequence>
<protein>
    <recommendedName>
        <fullName>Rac-like GTP-binding protein ARAC8</fullName>
    </recommendedName>
    <alternativeName>
        <fullName>GTPase protein ROP10</fullName>
    </alternativeName>
</protein>
<dbReference type="EMBL" id="AF079486">
    <property type="protein sequence ID" value="AAC63015.1"/>
    <property type="molecule type" value="mRNA"/>
</dbReference>
<dbReference type="EMBL" id="AF115475">
    <property type="protein sequence ID" value="AAF40247.1"/>
    <property type="molecule type" value="Genomic_DNA"/>
</dbReference>
<dbReference type="EMBL" id="AL049658">
    <property type="protein sequence ID" value="CAB41135.1"/>
    <property type="status" value="ALT_SEQ"/>
    <property type="molecule type" value="Genomic_DNA"/>
</dbReference>
<dbReference type="EMBL" id="CP002686">
    <property type="protein sequence ID" value="AEE78359.1"/>
    <property type="molecule type" value="Genomic_DNA"/>
</dbReference>
<dbReference type="EMBL" id="AK117324">
    <property type="protein sequence ID" value="BAC41995.1"/>
    <property type="molecule type" value="mRNA"/>
</dbReference>
<dbReference type="EMBL" id="BT005228">
    <property type="protein sequence ID" value="AAO63292.1"/>
    <property type="molecule type" value="mRNA"/>
</dbReference>
<dbReference type="PIR" id="T06679">
    <property type="entry name" value="T06679"/>
</dbReference>
<dbReference type="PIR" id="T48860">
    <property type="entry name" value="T48860"/>
</dbReference>
<dbReference type="RefSeq" id="NP_566897.1">
    <property type="nucleotide sequence ID" value="NM_114673.3"/>
</dbReference>
<dbReference type="SMR" id="Q9SU67"/>
<dbReference type="BioGRID" id="9278">
    <property type="interactions" value="29"/>
</dbReference>
<dbReference type="DIP" id="DIP-29823N"/>
<dbReference type="FunCoup" id="Q9SU67">
    <property type="interactions" value="3047"/>
</dbReference>
<dbReference type="IntAct" id="Q9SU67">
    <property type="interactions" value="30"/>
</dbReference>
<dbReference type="STRING" id="3702.Q9SU67"/>
<dbReference type="SwissPalm" id="Q9SU67"/>
<dbReference type="PaxDb" id="3702-AT3G48040.1"/>
<dbReference type="ProteomicsDB" id="236399"/>
<dbReference type="EnsemblPlants" id="AT3G48040.1">
    <property type="protein sequence ID" value="AT3G48040.1"/>
    <property type="gene ID" value="AT3G48040"/>
</dbReference>
<dbReference type="GeneID" id="823959"/>
<dbReference type="Gramene" id="AT3G48040.1">
    <property type="protein sequence ID" value="AT3G48040.1"/>
    <property type="gene ID" value="AT3G48040"/>
</dbReference>
<dbReference type="KEGG" id="ath:AT3G48040"/>
<dbReference type="Araport" id="AT3G48040"/>
<dbReference type="TAIR" id="AT3G48040">
    <property type="gene designation" value="ROP10"/>
</dbReference>
<dbReference type="eggNOG" id="KOG0393">
    <property type="taxonomic scope" value="Eukaryota"/>
</dbReference>
<dbReference type="HOGENOM" id="CLU_041217_21_3_1"/>
<dbReference type="InParanoid" id="Q9SU67"/>
<dbReference type="OMA" id="ENVIHKW"/>
<dbReference type="OrthoDB" id="8830751at2759"/>
<dbReference type="PhylomeDB" id="Q9SU67"/>
<dbReference type="PRO" id="PR:Q9SU67"/>
<dbReference type="Proteomes" id="UP000006548">
    <property type="component" value="Chromosome 3"/>
</dbReference>
<dbReference type="ExpressionAtlas" id="Q9SU67">
    <property type="expression patterns" value="baseline and differential"/>
</dbReference>
<dbReference type="GO" id="GO:0005829">
    <property type="term" value="C:cytosol"/>
    <property type="evidence" value="ECO:0007005"/>
    <property type="project" value="TAIR"/>
</dbReference>
<dbReference type="GO" id="GO:0005886">
    <property type="term" value="C:plasma membrane"/>
    <property type="evidence" value="ECO:0000314"/>
    <property type="project" value="TAIR"/>
</dbReference>
<dbReference type="GO" id="GO:0005525">
    <property type="term" value="F:GTP binding"/>
    <property type="evidence" value="ECO:0007669"/>
    <property type="project" value="UniProtKB-KW"/>
</dbReference>
<dbReference type="GO" id="GO:0003924">
    <property type="term" value="F:GTPase activity"/>
    <property type="evidence" value="ECO:0000250"/>
    <property type="project" value="TAIR"/>
</dbReference>
<dbReference type="GO" id="GO:0009738">
    <property type="term" value="P:abscisic acid-activated signaling pathway"/>
    <property type="evidence" value="ECO:0000304"/>
    <property type="project" value="TAIR"/>
</dbReference>
<dbReference type="GO" id="GO:0009788">
    <property type="term" value="P:negative regulation of abscisic acid-activated signaling pathway"/>
    <property type="evidence" value="ECO:0000304"/>
    <property type="project" value="TAIR"/>
</dbReference>
<dbReference type="GO" id="GO:0007264">
    <property type="term" value="P:small GTPase-mediated signal transduction"/>
    <property type="evidence" value="ECO:0007669"/>
    <property type="project" value="InterPro"/>
</dbReference>
<dbReference type="CDD" id="cd04133">
    <property type="entry name" value="Rop_like"/>
    <property type="match status" value="1"/>
</dbReference>
<dbReference type="FunFam" id="3.40.50.300:FF:000512">
    <property type="entry name" value="Rac-like GTP-binding protein 3"/>
    <property type="match status" value="1"/>
</dbReference>
<dbReference type="Gene3D" id="3.40.50.300">
    <property type="entry name" value="P-loop containing nucleotide triphosphate hydrolases"/>
    <property type="match status" value="1"/>
</dbReference>
<dbReference type="InterPro" id="IPR027417">
    <property type="entry name" value="P-loop_NTPase"/>
</dbReference>
<dbReference type="InterPro" id="IPR005225">
    <property type="entry name" value="Small_GTP-bd"/>
</dbReference>
<dbReference type="InterPro" id="IPR001806">
    <property type="entry name" value="Small_GTPase"/>
</dbReference>
<dbReference type="InterPro" id="IPR003578">
    <property type="entry name" value="Small_GTPase_Rho"/>
</dbReference>
<dbReference type="NCBIfam" id="TIGR00231">
    <property type="entry name" value="small_GTP"/>
    <property type="match status" value="1"/>
</dbReference>
<dbReference type="PANTHER" id="PTHR24072">
    <property type="entry name" value="RHO FAMILY GTPASE"/>
    <property type="match status" value="1"/>
</dbReference>
<dbReference type="Pfam" id="PF00071">
    <property type="entry name" value="Ras"/>
    <property type="match status" value="1"/>
</dbReference>
<dbReference type="PRINTS" id="PR00449">
    <property type="entry name" value="RASTRNSFRMNG"/>
</dbReference>
<dbReference type="SMART" id="SM00175">
    <property type="entry name" value="RAB"/>
    <property type="match status" value="1"/>
</dbReference>
<dbReference type="SMART" id="SM00176">
    <property type="entry name" value="RAN"/>
    <property type="match status" value="1"/>
</dbReference>
<dbReference type="SMART" id="SM00173">
    <property type="entry name" value="RAS"/>
    <property type="match status" value="1"/>
</dbReference>
<dbReference type="SMART" id="SM00174">
    <property type="entry name" value="RHO"/>
    <property type="match status" value="1"/>
</dbReference>
<dbReference type="SUPFAM" id="SSF52540">
    <property type="entry name" value="P-loop containing nucleoside triphosphate hydrolases"/>
    <property type="match status" value="1"/>
</dbReference>
<dbReference type="PROSITE" id="PS51420">
    <property type="entry name" value="RHO"/>
    <property type="match status" value="1"/>
</dbReference>
<feature type="chain" id="PRO_0000198922" description="Rac-like GTP-binding protein ARAC8">
    <location>
        <begin position="1"/>
        <end position="208"/>
    </location>
</feature>
<feature type="short sequence motif" description="Effector region" evidence="2">
    <location>
        <begin position="37"/>
        <end position="45"/>
    </location>
</feature>
<feature type="binding site" evidence="1">
    <location>
        <begin position="15"/>
        <end position="22"/>
    </location>
    <ligand>
        <name>GTP</name>
        <dbReference type="ChEBI" id="CHEBI:37565"/>
    </ligand>
</feature>
<feature type="binding site" evidence="1">
    <location>
        <begin position="62"/>
        <end position="66"/>
    </location>
    <ligand>
        <name>GTP</name>
        <dbReference type="ChEBI" id="CHEBI:37565"/>
    </ligand>
</feature>
<feature type="binding site" evidence="1">
    <location>
        <begin position="120"/>
        <end position="123"/>
    </location>
    <ligand>
        <name>GTP</name>
        <dbReference type="ChEBI" id="CHEBI:37565"/>
    </ligand>
</feature>
<feature type="lipid moiety-binding region" description="S-palmitoyl cysteine" evidence="3">
    <location>
        <position position="199"/>
    </location>
</feature>
<feature type="lipid moiety-binding region" description="S-palmitoyl cysteine" evidence="3">
    <location>
        <position position="205"/>
    </location>
</feature>
<feature type="mutagenesis site" description="Affects the membrane location." evidence="3">
    <original>C</original>
    <variation>S</variation>
    <location>
        <position position="199"/>
    </location>
</feature>
<feature type="mutagenesis site" description="Affects the membrane location." evidence="3">
    <original>C</original>
    <variation>S</variation>
    <location>
        <position position="205"/>
    </location>
</feature>
<comment type="function">
    <text evidence="4">Acts as a negative regulator of abscisic acid (ABA) responses.</text>
</comment>
<comment type="subunit">
    <text evidence="5 6">Interacts with ICR1 (PubMed:17493810). Binds to SPK1 (PubMed:18308939).</text>
</comment>
<comment type="subcellular location">
    <subcellularLocation>
        <location evidence="3">Membrane</location>
        <topology evidence="3">Lipid-anchor</topology>
    </subcellularLocation>
</comment>
<comment type="PTM">
    <text evidence="3">Although this sequence has a C-terminal -CXXX, it is palmitoylated at Cys-205, rather than prenylated.</text>
</comment>
<comment type="similarity">
    <text evidence="7">Belongs to the small GTPase superfamily. Rho family.</text>
</comment>
<comment type="sequence caution" evidence="7">
    <conflict type="erroneous gene model prediction">
        <sequence resource="EMBL-CDS" id="CAB41135"/>
    </conflict>
</comment>
<reference key="1">
    <citation type="journal article" date="2000" name="Genetics">
        <title>Genetic structure and evolution of RAC-GTPases in Arabidopsis thaliana.</title>
        <authorList>
            <person name="Winge P."/>
            <person name="Brembu T."/>
            <person name="Kristensen R."/>
            <person name="Bones A.M."/>
        </authorList>
    </citation>
    <scope>NUCLEOTIDE SEQUENCE [MRNA]</scope>
    <source>
        <strain>cv. Columbia</strain>
        <strain>cv. Landsberg erecta</strain>
    </source>
</reference>
<reference key="2">
    <citation type="journal article" date="2000" name="Nature">
        <title>Sequence and analysis of chromosome 3 of the plant Arabidopsis thaliana.</title>
        <authorList>
            <person name="Salanoubat M."/>
            <person name="Lemcke K."/>
            <person name="Rieger M."/>
            <person name="Ansorge W."/>
            <person name="Unseld M."/>
            <person name="Fartmann B."/>
            <person name="Valle G."/>
            <person name="Bloecker H."/>
            <person name="Perez-Alonso M."/>
            <person name="Obermaier B."/>
            <person name="Delseny M."/>
            <person name="Boutry M."/>
            <person name="Grivell L.A."/>
            <person name="Mache R."/>
            <person name="Puigdomenech P."/>
            <person name="De Simone V."/>
            <person name="Choisne N."/>
            <person name="Artiguenave F."/>
            <person name="Robert C."/>
            <person name="Brottier P."/>
            <person name="Wincker P."/>
            <person name="Cattolico L."/>
            <person name="Weissenbach J."/>
            <person name="Saurin W."/>
            <person name="Quetier F."/>
            <person name="Schaefer M."/>
            <person name="Mueller-Auer S."/>
            <person name="Gabel C."/>
            <person name="Fuchs M."/>
            <person name="Benes V."/>
            <person name="Wurmbach E."/>
            <person name="Drzonek H."/>
            <person name="Erfle H."/>
            <person name="Jordan N."/>
            <person name="Bangert S."/>
            <person name="Wiedelmann R."/>
            <person name="Kranz H."/>
            <person name="Voss H."/>
            <person name="Holland R."/>
            <person name="Brandt P."/>
            <person name="Nyakatura G."/>
            <person name="Vezzi A."/>
            <person name="D'Angelo M."/>
            <person name="Pallavicini A."/>
            <person name="Toppo S."/>
            <person name="Simionati B."/>
            <person name="Conrad A."/>
            <person name="Hornischer K."/>
            <person name="Kauer G."/>
            <person name="Loehnert T.-H."/>
            <person name="Nordsiek G."/>
            <person name="Reichelt J."/>
            <person name="Scharfe M."/>
            <person name="Schoen O."/>
            <person name="Bargues M."/>
            <person name="Terol J."/>
            <person name="Climent J."/>
            <person name="Navarro P."/>
            <person name="Collado C."/>
            <person name="Perez-Perez A."/>
            <person name="Ottenwaelder B."/>
            <person name="Duchemin D."/>
            <person name="Cooke R."/>
            <person name="Laudie M."/>
            <person name="Berger-Llauro C."/>
            <person name="Purnelle B."/>
            <person name="Masuy D."/>
            <person name="de Haan M."/>
            <person name="Maarse A.C."/>
            <person name="Alcaraz J.-P."/>
            <person name="Cottet A."/>
            <person name="Casacuberta E."/>
            <person name="Monfort A."/>
            <person name="Argiriou A."/>
            <person name="Flores M."/>
            <person name="Liguori R."/>
            <person name="Vitale D."/>
            <person name="Mannhaupt G."/>
            <person name="Haase D."/>
            <person name="Schoof H."/>
            <person name="Rudd S."/>
            <person name="Zaccaria P."/>
            <person name="Mewes H.-W."/>
            <person name="Mayer K.F.X."/>
            <person name="Kaul S."/>
            <person name="Town C.D."/>
            <person name="Koo H.L."/>
            <person name="Tallon L.J."/>
            <person name="Jenkins J."/>
            <person name="Rooney T."/>
            <person name="Rizzo M."/>
            <person name="Walts A."/>
            <person name="Utterback T."/>
            <person name="Fujii C.Y."/>
            <person name="Shea T.P."/>
            <person name="Creasy T.H."/>
            <person name="Haas B."/>
            <person name="Maiti R."/>
            <person name="Wu D."/>
            <person name="Peterson J."/>
            <person name="Van Aken S."/>
            <person name="Pai G."/>
            <person name="Militscher J."/>
            <person name="Sellers P."/>
            <person name="Gill J.E."/>
            <person name="Feldblyum T.V."/>
            <person name="Preuss D."/>
            <person name="Lin X."/>
            <person name="Nierman W.C."/>
            <person name="Salzberg S.L."/>
            <person name="White O."/>
            <person name="Venter J.C."/>
            <person name="Fraser C.M."/>
            <person name="Kaneko T."/>
            <person name="Nakamura Y."/>
            <person name="Sato S."/>
            <person name="Kato T."/>
            <person name="Asamizu E."/>
            <person name="Sasamoto S."/>
            <person name="Kimura T."/>
            <person name="Idesawa K."/>
            <person name="Kawashima K."/>
            <person name="Kishida Y."/>
            <person name="Kiyokawa C."/>
            <person name="Kohara M."/>
            <person name="Matsumoto M."/>
            <person name="Matsuno A."/>
            <person name="Muraki A."/>
            <person name="Nakayama S."/>
            <person name="Nakazaki N."/>
            <person name="Shinpo S."/>
            <person name="Takeuchi C."/>
            <person name="Wada T."/>
            <person name="Watanabe A."/>
            <person name="Yamada M."/>
            <person name="Yasuda M."/>
            <person name="Tabata S."/>
        </authorList>
    </citation>
    <scope>NUCLEOTIDE SEQUENCE [LARGE SCALE GENOMIC DNA]</scope>
    <source>
        <strain>cv. Columbia</strain>
    </source>
</reference>
<reference key="3">
    <citation type="journal article" date="2017" name="Plant J.">
        <title>Araport11: a complete reannotation of the Arabidopsis thaliana reference genome.</title>
        <authorList>
            <person name="Cheng C.Y."/>
            <person name="Krishnakumar V."/>
            <person name="Chan A.P."/>
            <person name="Thibaud-Nissen F."/>
            <person name="Schobel S."/>
            <person name="Town C.D."/>
        </authorList>
    </citation>
    <scope>GENOME REANNOTATION</scope>
    <source>
        <strain>cv. Columbia</strain>
    </source>
</reference>
<reference key="4">
    <citation type="journal article" date="2002" name="Science">
        <title>Functional annotation of a full-length Arabidopsis cDNA collection.</title>
        <authorList>
            <person name="Seki M."/>
            <person name="Narusaka M."/>
            <person name="Kamiya A."/>
            <person name="Ishida J."/>
            <person name="Satou M."/>
            <person name="Sakurai T."/>
            <person name="Nakajima M."/>
            <person name="Enju A."/>
            <person name="Akiyama K."/>
            <person name="Oono Y."/>
            <person name="Muramatsu M."/>
            <person name="Hayashizaki Y."/>
            <person name="Kawai J."/>
            <person name="Carninci P."/>
            <person name="Itoh M."/>
            <person name="Ishii Y."/>
            <person name="Arakawa T."/>
            <person name="Shibata K."/>
            <person name="Shinagawa A."/>
            <person name="Shinozaki K."/>
        </authorList>
    </citation>
    <scope>NUCLEOTIDE SEQUENCE [LARGE SCALE MRNA]</scope>
    <source>
        <strain>cv. Columbia</strain>
    </source>
</reference>
<reference key="5">
    <citation type="journal article" date="2003" name="Science">
        <title>Empirical analysis of transcriptional activity in the Arabidopsis genome.</title>
        <authorList>
            <person name="Yamada K."/>
            <person name="Lim J."/>
            <person name="Dale J.M."/>
            <person name="Chen H."/>
            <person name="Shinn P."/>
            <person name="Palm C.J."/>
            <person name="Southwick A.M."/>
            <person name="Wu H.C."/>
            <person name="Kim C.J."/>
            <person name="Nguyen M."/>
            <person name="Pham P.K."/>
            <person name="Cheuk R.F."/>
            <person name="Karlin-Newmann G."/>
            <person name="Liu S.X."/>
            <person name="Lam B."/>
            <person name="Sakano H."/>
            <person name="Wu T."/>
            <person name="Yu G."/>
            <person name="Miranda M."/>
            <person name="Quach H.L."/>
            <person name="Tripp M."/>
            <person name="Chang C.H."/>
            <person name="Lee J.M."/>
            <person name="Toriumi M.J."/>
            <person name="Chan M.M."/>
            <person name="Tang C.C."/>
            <person name="Onodera C.S."/>
            <person name="Deng J.M."/>
            <person name="Akiyama K."/>
            <person name="Ansari Y."/>
            <person name="Arakawa T."/>
            <person name="Banh J."/>
            <person name="Banno F."/>
            <person name="Bowser L."/>
            <person name="Brooks S.Y."/>
            <person name="Carninci P."/>
            <person name="Chao Q."/>
            <person name="Choy N."/>
            <person name="Enju A."/>
            <person name="Goldsmith A.D."/>
            <person name="Gurjal M."/>
            <person name="Hansen N.F."/>
            <person name="Hayashizaki Y."/>
            <person name="Johnson-Hopson C."/>
            <person name="Hsuan V.W."/>
            <person name="Iida K."/>
            <person name="Karnes M."/>
            <person name="Khan S."/>
            <person name="Koesema E."/>
            <person name="Ishida J."/>
            <person name="Jiang P.X."/>
            <person name="Jones T."/>
            <person name="Kawai J."/>
            <person name="Kamiya A."/>
            <person name="Meyers C."/>
            <person name="Nakajima M."/>
            <person name="Narusaka M."/>
            <person name="Seki M."/>
            <person name="Sakurai T."/>
            <person name="Satou M."/>
            <person name="Tamse R."/>
            <person name="Vaysberg M."/>
            <person name="Wallender E.K."/>
            <person name="Wong C."/>
            <person name="Yamamura Y."/>
            <person name="Yuan S."/>
            <person name="Shinozaki K."/>
            <person name="Davis R.W."/>
            <person name="Theologis A."/>
            <person name="Ecker J.R."/>
        </authorList>
    </citation>
    <scope>NUCLEOTIDE SEQUENCE [LARGE SCALE MRNA]</scope>
    <source>
        <strain>cv. Columbia</strain>
    </source>
</reference>
<reference key="6">
    <citation type="journal article" date="2002" name="Plant Cell">
        <title>A cell-specific, prenylation-independent mechanism regulates targeting of type II RACs.</title>
        <authorList>
            <person name="Lavy M."/>
            <person name="Bracha-Drori K."/>
            <person name="Sternberg H."/>
            <person name="Yalovsky S."/>
        </authorList>
    </citation>
    <scope>PALMITOYLATION AT CYS-199 AND CYS-205</scope>
    <scope>SUBCELLULAR LOCATION</scope>
    <scope>MUTAGENESIS OF CYS-199 AND CYS-205</scope>
</reference>
<reference key="7">
    <citation type="journal article" date="2002" name="Plant Cell">
        <title>Plasma membrane-associated ROP10 small GTPase is a specific negative regulator of abscisic acid responses in Arabidopsis.</title>
        <authorList>
            <person name="Zheng Z.-L."/>
            <person name="Nafisi M."/>
            <person name="Tam A."/>
            <person name="Li H."/>
            <person name="Crowell D.N."/>
            <person name="Chary S.N."/>
            <person name="Schroeder J.I."/>
            <person name="Shen J."/>
            <person name="Yang Z."/>
        </authorList>
    </citation>
    <scope>FUNCTION</scope>
</reference>
<reference key="8">
    <citation type="journal article" date="2007" name="Curr. Biol.">
        <title>A Novel ROP/RAC effector links cell polarity, root-meristem maintenance, and vesicle trafficking.</title>
        <authorList>
            <person name="Lavy M."/>
            <person name="Bloch D."/>
            <person name="Hazak O."/>
            <person name="Gutman I."/>
            <person name="Poraty L."/>
            <person name="Sorek N."/>
            <person name="Sternberg H."/>
            <person name="Yalovsky S."/>
        </authorList>
    </citation>
    <scope>INTERACTION WITH ICR1</scope>
</reference>
<reference key="9">
    <citation type="journal article" date="2008" name="Proc. Natl. Acad. Sci. U.S.A.">
        <title>A SPIKE1 signaling complex controls actin-dependent cell morphogenesis through the heteromeric WAVE and ARP2/3 complexes.</title>
        <authorList>
            <person name="Basu D."/>
            <person name="Le J."/>
            <person name="Zakharova T."/>
            <person name="Mallery E.L."/>
            <person name="Szymanski D.B."/>
        </authorList>
    </citation>
    <scope>INTERACTION WITH SPK1</scope>
    <source>
        <strain>cv. Columbia</strain>
    </source>
</reference>
<evidence type="ECO:0000250" key="1"/>
<evidence type="ECO:0000255" key="2"/>
<evidence type="ECO:0000269" key="3">
    <source>
    </source>
</evidence>
<evidence type="ECO:0000269" key="4">
    <source>
    </source>
</evidence>
<evidence type="ECO:0000269" key="5">
    <source>
    </source>
</evidence>
<evidence type="ECO:0000269" key="6">
    <source>
    </source>
</evidence>
<evidence type="ECO:0000305" key="7"/>
<name>RAC8_ARATH</name>
<accession>Q9SU67</accession>
<accession>O82482</accession>
<proteinExistence type="evidence at protein level"/>
<gene>
    <name type="primary">ARAC8</name>
    <name type="synonym">ROP10</name>
    <name type="ordered locus">At3g48040</name>
    <name type="ORF">T17F15.90</name>
</gene>
<organism>
    <name type="scientific">Arabidopsis thaliana</name>
    <name type="common">Mouse-ear cress</name>
    <dbReference type="NCBI Taxonomy" id="3702"/>
    <lineage>
        <taxon>Eukaryota</taxon>
        <taxon>Viridiplantae</taxon>
        <taxon>Streptophyta</taxon>
        <taxon>Embryophyta</taxon>
        <taxon>Tracheophyta</taxon>
        <taxon>Spermatophyta</taxon>
        <taxon>Magnoliopsida</taxon>
        <taxon>eudicotyledons</taxon>
        <taxon>Gunneridae</taxon>
        <taxon>Pentapetalae</taxon>
        <taxon>rosids</taxon>
        <taxon>malvids</taxon>
        <taxon>Brassicales</taxon>
        <taxon>Brassicaceae</taxon>
        <taxon>Camelineae</taxon>
        <taxon>Arabidopsis</taxon>
    </lineage>
</organism>
<keyword id="KW-0938">Abscisic acid signaling pathway</keyword>
<keyword id="KW-0342">GTP-binding</keyword>
<keyword id="KW-0449">Lipoprotein</keyword>
<keyword id="KW-0472">Membrane</keyword>
<keyword id="KW-0547">Nucleotide-binding</keyword>
<keyword id="KW-0564">Palmitate</keyword>
<keyword id="KW-1185">Reference proteome</keyword>